<gene>
    <name type="primary">spo0M</name>
    <name type="synonym">ygaI</name>
    <name type="ordered locus">BSU08760</name>
</gene>
<reference key="1">
    <citation type="journal article" date="1998" name="Gene">
        <title>A novel sporulation-control gene (spo0M) of Bacillus subtilis with a sigmaH-regulated promoter.</title>
        <authorList>
            <person name="Han W.-D."/>
            <person name="Kawamoto S."/>
            <person name="Hosoya Y."/>
            <person name="Fujita M."/>
            <person name="Sadaie Y."/>
            <person name="Suzuki K."/>
            <person name="Ohashi Y."/>
            <person name="Kawamura F."/>
            <person name="Ochi K."/>
        </authorList>
    </citation>
    <scope>NUCLEOTIDE SEQUENCE [GENOMIC DNA]</scope>
    <scope>PROTEIN SEQUENCE OF 9-38 AND 188-209</scope>
    <scope>INDUCTION</scope>
    <scope>FUNCTION</scope>
    <source>
        <strain>168</strain>
    </source>
</reference>
<reference key="2">
    <citation type="journal article" date="1997" name="Microbiology">
        <title>The Bacillus subtilis 168 chromosome from sspE to katA.</title>
        <authorList>
            <person name="Cummings N.J."/>
            <person name="Connerton I.F."/>
        </authorList>
    </citation>
    <scope>NUCLEOTIDE SEQUENCE [GENOMIC DNA]</scope>
    <source>
        <strain>168</strain>
    </source>
</reference>
<reference key="3">
    <citation type="journal article" date="1997" name="Nature">
        <title>The complete genome sequence of the Gram-positive bacterium Bacillus subtilis.</title>
        <authorList>
            <person name="Kunst F."/>
            <person name="Ogasawara N."/>
            <person name="Moszer I."/>
            <person name="Albertini A.M."/>
            <person name="Alloni G."/>
            <person name="Azevedo V."/>
            <person name="Bertero M.G."/>
            <person name="Bessieres P."/>
            <person name="Bolotin A."/>
            <person name="Borchert S."/>
            <person name="Borriss R."/>
            <person name="Boursier L."/>
            <person name="Brans A."/>
            <person name="Braun M."/>
            <person name="Brignell S.C."/>
            <person name="Bron S."/>
            <person name="Brouillet S."/>
            <person name="Bruschi C.V."/>
            <person name="Caldwell B."/>
            <person name="Capuano V."/>
            <person name="Carter N.M."/>
            <person name="Choi S.-K."/>
            <person name="Codani J.-J."/>
            <person name="Connerton I.F."/>
            <person name="Cummings N.J."/>
            <person name="Daniel R.A."/>
            <person name="Denizot F."/>
            <person name="Devine K.M."/>
            <person name="Duesterhoeft A."/>
            <person name="Ehrlich S.D."/>
            <person name="Emmerson P.T."/>
            <person name="Entian K.-D."/>
            <person name="Errington J."/>
            <person name="Fabret C."/>
            <person name="Ferrari E."/>
            <person name="Foulger D."/>
            <person name="Fritz C."/>
            <person name="Fujita M."/>
            <person name="Fujita Y."/>
            <person name="Fuma S."/>
            <person name="Galizzi A."/>
            <person name="Galleron N."/>
            <person name="Ghim S.-Y."/>
            <person name="Glaser P."/>
            <person name="Goffeau A."/>
            <person name="Golightly E.J."/>
            <person name="Grandi G."/>
            <person name="Guiseppi G."/>
            <person name="Guy B.J."/>
            <person name="Haga K."/>
            <person name="Haiech J."/>
            <person name="Harwood C.R."/>
            <person name="Henaut A."/>
            <person name="Hilbert H."/>
            <person name="Holsappel S."/>
            <person name="Hosono S."/>
            <person name="Hullo M.-F."/>
            <person name="Itaya M."/>
            <person name="Jones L.-M."/>
            <person name="Joris B."/>
            <person name="Karamata D."/>
            <person name="Kasahara Y."/>
            <person name="Klaerr-Blanchard M."/>
            <person name="Klein C."/>
            <person name="Kobayashi Y."/>
            <person name="Koetter P."/>
            <person name="Koningstein G."/>
            <person name="Krogh S."/>
            <person name="Kumano M."/>
            <person name="Kurita K."/>
            <person name="Lapidus A."/>
            <person name="Lardinois S."/>
            <person name="Lauber J."/>
            <person name="Lazarevic V."/>
            <person name="Lee S.-M."/>
            <person name="Levine A."/>
            <person name="Liu H."/>
            <person name="Masuda S."/>
            <person name="Mauel C."/>
            <person name="Medigue C."/>
            <person name="Medina N."/>
            <person name="Mellado R.P."/>
            <person name="Mizuno M."/>
            <person name="Moestl D."/>
            <person name="Nakai S."/>
            <person name="Noback M."/>
            <person name="Noone D."/>
            <person name="O'Reilly M."/>
            <person name="Ogawa K."/>
            <person name="Ogiwara A."/>
            <person name="Oudega B."/>
            <person name="Park S.-H."/>
            <person name="Parro V."/>
            <person name="Pohl T.M."/>
            <person name="Portetelle D."/>
            <person name="Porwollik S."/>
            <person name="Prescott A.M."/>
            <person name="Presecan E."/>
            <person name="Pujic P."/>
            <person name="Purnelle B."/>
            <person name="Rapoport G."/>
            <person name="Rey M."/>
            <person name="Reynolds S."/>
            <person name="Rieger M."/>
            <person name="Rivolta C."/>
            <person name="Rocha E."/>
            <person name="Roche B."/>
            <person name="Rose M."/>
            <person name="Sadaie Y."/>
            <person name="Sato T."/>
            <person name="Scanlan E."/>
            <person name="Schleich S."/>
            <person name="Schroeter R."/>
            <person name="Scoffone F."/>
            <person name="Sekiguchi J."/>
            <person name="Sekowska A."/>
            <person name="Seror S.J."/>
            <person name="Serror P."/>
            <person name="Shin B.-S."/>
            <person name="Soldo B."/>
            <person name="Sorokin A."/>
            <person name="Tacconi E."/>
            <person name="Takagi T."/>
            <person name="Takahashi H."/>
            <person name="Takemaru K."/>
            <person name="Takeuchi M."/>
            <person name="Tamakoshi A."/>
            <person name="Tanaka T."/>
            <person name="Terpstra P."/>
            <person name="Tognoni A."/>
            <person name="Tosato V."/>
            <person name="Uchiyama S."/>
            <person name="Vandenbol M."/>
            <person name="Vannier F."/>
            <person name="Vassarotti A."/>
            <person name="Viari A."/>
            <person name="Wambutt R."/>
            <person name="Wedler E."/>
            <person name="Wedler H."/>
            <person name="Weitzenegger T."/>
            <person name="Winters P."/>
            <person name="Wipat A."/>
            <person name="Yamamoto H."/>
            <person name="Yamane K."/>
            <person name="Yasumoto K."/>
            <person name="Yata K."/>
            <person name="Yoshida K."/>
            <person name="Yoshikawa H.-F."/>
            <person name="Zumstein E."/>
            <person name="Yoshikawa H."/>
            <person name="Danchin A."/>
        </authorList>
    </citation>
    <scope>NUCLEOTIDE SEQUENCE [LARGE SCALE GENOMIC DNA]</scope>
    <source>
        <strain>168</strain>
    </source>
</reference>
<reference key="4">
    <citation type="journal article" date="2009" name="Microbiology">
        <title>From a consortium sequence to a unified sequence: the Bacillus subtilis 168 reference genome a decade later.</title>
        <authorList>
            <person name="Barbe V."/>
            <person name="Cruveiller S."/>
            <person name="Kunst F."/>
            <person name="Lenoble P."/>
            <person name="Meurice G."/>
            <person name="Sekowska A."/>
            <person name="Vallenet D."/>
            <person name="Wang T."/>
            <person name="Moszer I."/>
            <person name="Medigue C."/>
            <person name="Danchin A."/>
        </authorList>
    </citation>
    <scope>SEQUENCE REVISION TO 169; 198; 242 AND 257</scope>
</reference>
<sequence length="258" mass="29733">MSFFKKLAASAGIGAAKVDTILEKDAYFPGEEVQGTVHVKGGKIAQDIRYIDLQLSTRYVIVKDDEEHRKYATIHSFRVTGSFTIQPGEEHQFPFTFTLPLDTPITVGKVEVAVVTDLDIQGGIDKSDHDRIFVEAHPWIENVLEAIENLGFRLNEADCEQAPYFQRRLPFVQEFEFVPTSGYYRQMLDELELIFLLDEDGLEIIFEVDRRARGLRGWLEEMYNDGEQLVRVRFSQSELEDTEELEEVLEEILDQYAE</sequence>
<proteinExistence type="evidence at protein level"/>
<name>SP0M_BACSU</name>
<organism>
    <name type="scientific">Bacillus subtilis (strain 168)</name>
    <dbReference type="NCBI Taxonomy" id="224308"/>
    <lineage>
        <taxon>Bacteria</taxon>
        <taxon>Bacillati</taxon>
        <taxon>Bacillota</taxon>
        <taxon>Bacilli</taxon>
        <taxon>Bacillales</taxon>
        <taxon>Bacillaceae</taxon>
        <taxon>Bacillus</taxon>
    </lineage>
</organism>
<comment type="function">
    <text evidence="1">Controls the expression of spo0A and is required to pass the morphological stage 0 of sporulation.</text>
</comment>
<comment type="induction">
    <text evidence="1">Expression controlled by a sigma-H-regulated promoter which needs the sigma-H factor for the binding of the RNA polymerase and subsequent transcription.</text>
</comment>
<comment type="similarity">
    <text evidence="2">Belongs to the spo0M family.</text>
</comment>
<feature type="chain" id="PRO_0000359937" description="Sporulation-control protein spo0M">
    <location>
        <begin position="1"/>
        <end position="258"/>
    </location>
</feature>
<feature type="sequence conflict" description="In Ref. 2; CAB04803." evidence="2" ref="2">
    <original>L</original>
    <variation>F</variation>
    <location>
        <position position="169"/>
    </location>
</feature>
<feature type="sequence conflict" description="In Ref. 2; CAB04803." evidence="2" ref="2">
    <original>D</original>
    <variation>G</variation>
    <location>
        <position position="198"/>
    </location>
</feature>
<feature type="sequence conflict" description="In Ref. 2; CAB04803." evidence="2" ref="2">
    <original>T</original>
    <variation>A</variation>
    <location>
        <position position="242"/>
    </location>
</feature>
<feature type="sequence conflict" description="In Ref. 2; CAB04803." evidence="2" ref="2">
    <original>A</original>
    <variation>V</variation>
    <location>
        <position position="257"/>
    </location>
</feature>
<feature type="strand" evidence="3">
    <location>
        <begin position="17"/>
        <end position="23"/>
    </location>
</feature>
<feature type="strand" evidence="3">
    <location>
        <begin position="25"/>
        <end position="27"/>
    </location>
</feature>
<feature type="strand" evidence="3">
    <location>
        <begin position="32"/>
        <end position="40"/>
    </location>
</feature>
<feature type="strand" evidence="3">
    <location>
        <begin position="46"/>
        <end position="63"/>
    </location>
</feature>
<feature type="strand" evidence="3">
    <location>
        <begin position="66"/>
        <end position="80"/>
    </location>
</feature>
<feature type="strand" evidence="3">
    <location>
        <begin position="83"/>
        <end position="85"/>
    </location>
</feature>
<feature type="strand" evidence="3">
    <location>
        <begin position="90"/>
        <end position="98"/>
    </location>
</feature>
<feature type="strand" evidence="3">
    <location>
        <begin position="112"/>
        <end position="123"/>
    </location>
</feature>
<feature type="strand" evidence="3">
    <location>
        <begin position="126"/>
        <end position="134"/>
    </location>
</feature>
<feature type="helix" evidence="3">
    <location>
        <begin position="138"/>
        <end position="149"/>
    </location>
</feature>
<feature type="strand" evidence="3">
    <location>
        <begin position="152"/>
        <end position="161"/>
    </location>
</feature>
<feature type="helix" evidence="3">
    <location>
        <begin position="163"/>
        <end position="165"/>
    </location>
</feature>
<feature type="strand" evidence="3">
    <location>
        <begin position="168"/>
        <end position="179"/>
    </location>
</feature>
<feature type="helix" evidence="3">
    <location>
        <begin position="182"/>
        <end position="187"/>
    </location>
</feature>
<feature type="strand" evidence="3">
    <location>
        <begin position="191"/>
        <end position="197"/>
    </location>
</feature>
<feature type="strand" evidence="3">
    <location>
        <begin position="199"/>
        <end position="208"/>
    </location>
</feature>
<feature type="turn" evidence="3">
    <location>
        <begin position="210"/>
        <end position="214"/>
    </location>
</feature>
<feature type="helix" evidence="3">
    <location>
        <begin position="220"/>
        <end position="222"/>
    </location>
</feature>
<feature type="turn" evidence="3">
    <location>
        <begin position="223"/>
        <end position="225"/>
    </location>
</feature>
<feature type="strand" evidence="3">
    <location>
        <begin position="230"/>
        <end position="235"/>
    </location>
</feature>
<feature type="helix" evidence="3">
    <location>
        <begin position="236"/>
        <end position="240"/>
    </location>
</feature>
<feature type="helix" evidence="3">
    <location>
        <begin position="242"/>
        <end position="254"/>
    </location>
</feature>
<feature type="turn" evidence="3">
    <location>
        <begin position="255"/>
        <end position="257"/>
    </location>
</feature>
<evidence type="ECO:0000269" key="1">
    <source>
    </source>
</evidence>
<evidence type="ECO:0000305" key="2"/>
<evidence type="ECO:0007829" key="3">
    <source>
        <dbReference type="PDB" id="5CL2"/>
    </source>
</evidence>
<protein>
    <recommendedName>
        <fullName>Sporulation-control protein spo0M</fullName>
    </recommendedName>
    <alternativeName>
        <fullName>Stage 0 sporulation protein M</fullName>
    </alternativeName>
</protein>
<accession>P71088</accession>
<accession>O87735</accession>
<accession>Q796Y7</accession>
<keyword id="KW-0002">3D-structure</keyword>
<keyword id="KW-0903">Direct protein sequencing</keyword>
<keyword id="KW-1185">Reference proteome</keyword>
<keyword id="KW-0749">Sporulation</keyword>
<dbReference type="EMBL" id="D89936">
    <property type="protein sequence ID" value="BAA32616.1"/>
    <property type="molecule type" value="Genomic_DNA"/>
</dbReference>
<dbReference type="EMBL" id="Z82044">
    <property type="protein sequence ID" value="CAB04803.1"/>
    <property type="molecule type" value="Genomic_DNA"/>
</dbReference>
<dbReference type="EMBL" id="AL009126">
    <property type="protein sequence ID" value="CAB12704.2"/>
    <property type="molecule type" value="Genomic_DNA"/>
</dbReference>
<dbReference type="PIR" id="D69816">
    <property type="entry name" value="D69816"/>
</dbReference>
<dbReference type="RefSeq" id="NP_388756.2">
    <property type="nucleotide sequence ID" value="NC_000964.3"/>
</dbReference>
<dbReference type="RefSeq" id="WP_003233481.1">
    <property type="nucleotide sequence ID" value="NZ_OZ025638.1"/>
</dbReference>
<dbReference type="PDB" id="5CL2">
    <property type="method" value="X-ray"/>
    <property type="resolution" value="2.30 A"/>
    <property type="chains" value="A/B=11-258"/>
</dbReference>
<dbReference type="PDBsum" id="5CL2"/>
<dbReference type="SMR" id="P71088"/>
<dbReference type="FunCoup" id="P71088">
    <property type="interactions" value="58"/>
</dbReference>
<dbReference type="IntAct" id="P71088">
    <property type="interactions" value="1"/>
</dbReference>
<dbReference type="MINT" id="P71088"/>
<dbReference type="STRING" id="224308.BSU08760"/>
<dbReference type="jPOST" id="P71088"/>
<dbReference type="PaxDb" id="224308-BSU08760"/>
<dbReference type="EnsemblBacteria" id="CAB12704">
    <property type="protein sequence ID" value="CAB12704"/>
    <property type="gene ID" value="BSU_08760"/>
</dbReference>
<dbReference type="GeneID" id="939725"/>
<dbReference type="KEGG" id="bsu:BSU08760"/>
<dbReference type="PATRIC" id="fig|224308.179.peg.945"/>
<dbReference type="eggNOG" id="COG4326">
    <property type="taxonomic scope" value="Bacteria"/>
</dbReference>
<dbReference type="InParanoid" id="P71088"/>
<dbReference type="OrthoDB" id="2351239at2"/>
<dbReference type="PhylomeDB" id="P71088"/>
<dbReference type="BioCyc" id="BSUB:BSU08760-MONOMER"/>
<dbReference type="EvolutionaryTrace" id="P71088"/>
<dbReference type="Proteomes" id="UP000001570">
    <property type="component" value="Chromosome"/>
</dbReference>
<dbReference type="GO" id="GO:0030435">
    <property type="term" value="P:sporulation resulting in formation of a cellular spore"/>
    <property type="evidence" value="ECO:0007669"/>
    <property type="project" value="UniProtKB-KW"/>
</dbReference>
<dbReference type="Gene3D" id="2.60.40.640">
    <property type="match status" value="1"/>
</dbReference>
<dbReference type="InterPro" id="IPR014752">
    <property type="entry name" value="Arrestin-like_C"/>
</dbReference>
<dbReference type="InterPro" id="IPR014756">
    <property type="entry name" value="Ig_E-set"/>
</dbReference>
<dbReference type="InterPro" id="IPR009776">
    <property type="entry name" value="Spore_0_M"/>
</dbReference>
<dbReference type="PANTHER" id="PTHR40053">
    <property type="entry name" value="SPORULATION-CONTROL PROTEIN SPO0M"/>
    <property type="match status" value="1"/>
</dbReference>
<dbReference type="PANTHER" id="PTHR40053:SF1">
    <property type="entry name" value="SPORULATION-CONTROL PROTEIN SPO0M"/>
    <property type="match status" value="1"/>
</dbReference>
<dbReference type="Pfam" id="PF07070">
    <property type="entry name" value="Spo0M"/>
    <property type="match status" value="1"/>
</dbReference>
<dbReference type="SUPFAM" id="SSF81296">
    <property type="entry name" value="E set domains"/>
    <property type="match status" value="1"/>
</dbReference>